<organism>
    <name type="scientific">Bordetella pertussis (strain Tohama I / ATCC BAA-589 / NCTC 13251)</name>
    <dbReference type="NCBI Taxonomy" id="257313"/>
    <lineage>
        <taxon>Bacteria</taxon>
        <taxon>Pseudomonadati</taxon>
        <taxon>Pseudomonadota</taxon>
        <taxon>Betaproteobacteria</taxon>
        <taxon>Burkholderiales</taxon>
        <taxon>Alcaligenaceae</taxon>
        <taxon>Bordetella</taxon>
    </lineage>
</organism>
<dbReference type="EC" id="3.1.26.4" evidence="1"/>
<dbReference type="EMBL" id="BX640420">
    <property type="protein sequence ID" value="CAE43477.1"/>
    <property type="molecule type" value="Genomic_DNA"/>
</dbReference>
<dbReference type="RefSeq" id="NP_881762.1">
    <property type="nucleotide sequence ID" value="NC_002929.2"/>
</dbReference>
<dbReference type="RefSeq" id="WP_010931354.1">
    <property type="nucleotide sequence ID" value="NZ_CP039022.1"/>
</dbReference>
<dbReference type="SMR" id="Q7VRX8"/>
<dbReference type="STRING" id="257313.BP3211"/>
<dbReference type="PaxDb" id="257313-BP3211"/>
<dbReference type="GeneID" id="69603138"/>
<dbReference type="KEGG" id="bpe:BP3211"/>
<dbReference type="PATRIC" id="fig|257313.5.peg.3472"/>
<dbReference type="eggNOG" id="COG0328">
    <property type="taxonomic scope" value="Bacteria"/>
</dbReference>
<dbReference type="HOGENOM" id="CLU_030894_6_0_4"/>
<dbReference type="Proteomes" id="UP000002676">
    <property type="component" value="Chromosome"/>
</dbReference>
<dbReference type="GO" id="GO:0005737">
    <property type="term" value="C:cytoplasm"/>
    <property type="evidence" value="ECO:0007669"/>
    <property type="project" value="UniProtKB-SubCell"/>
</dbReference>
<dbReference type="GO" id="GO:0000287">
    <property type="term" value="F:magnesium ion binding"/>
    <property type="evidence" value="ECO:0007669"/>
    <property type="project" value="UniProtKB-UniRule"/>
</dbReference>
<dbReference type="GO" id="GO:0003676">
    <property type="term" value="F:nucleic acid binding"/>
    <property type="evidence" value="ECO:0007669"/>
    <property type="project" value="InterPro"/>
</dbReference>
<dbReference type="GO" id="GO:0004523">
    <property type="term" value="F:RNA-DNA hybrid ribonuclease activity"/>
    <property type="evidence" value="ECO:0007669"/>
    <property type="project" value="UniProtKB-UniRule"/>
</dbReference>
<dbReference type="GO" id="GO:0043137">
    <property type="term" value="P:DNA replication, removal of RNA primer"/>
    <property type="evidence" value="ECO:0007669"/>
    <property type="project" value="TreeGrafter"/>
</dbReference>
<dbReference type="CDD" id="cd09278">
    <property type="entry name" value="RNase_HI_prokaryote_like"/>
    <property type="match status" value="1"/>
</dbReference>
<dbReference type="FunFam" id="3.30.420.10:FF:000089">
    <property type="entry name" value="Ribonuclease H"/>
    <property type="match status" value="1"/>
</dbReference>
<dbReference type="Gene3D" id="3.30.420.10">
    <property type="entry name" value="Ribonuclease H-like superfamily/Ribonuclease H"/>
    <property type="match status" value="1"/>
</dbReference>
<dbReference type="HAMAP" id="MF_00042">
    <property type="entry name" value="RNase_H"/>
    <property type="match status" value="1"/>
</dbReference>
<dbReference type="InterPro" id="IPR050092">
    <property type="entry name" value="RNase_H"/>
</dbReference>
<dbReference type="InterPro" id="IPR012337">
    <property type="entry name" value="RNaseH-like_sf"/>
</dbReference>
<dbReference type="InterPro" id="IPR002156">
    <property type="entry name" value="RNaseH_domain"/>
</dbReference>
<dbReference type="InterPro" id="IPR036397">
    <property type="entry name" value="RNaseH_sf"/>
</dbReference>
<dbReference type="InterPro" id="IPR022892">
    <property type="entry name" value="RNaseHI"/>
</dbReference>
<dbReference type="NCBIfam" id="NF001236">
    <property type="entry name" value="PRK00203.1"/>
    <property type="match status" value="1"/>
</dbReference>
<dbReference type="PANTHER" id="PTHR10642">
    <property type="entry name" value="RIBONUCLEASE H1"/>
    <property type="match status" value="1"/>
</dbReference>
<dbReference type="PANTHER" id="PTHR10642:SF26">
    <property type="entry name" value="RIBONUCLEASE H1"/>
    <property type="match status" value="1"/>
</dbReference>
<dbReference type="Pfam" id="PF00075">
    <property type="entry name" value="RNase_H"/>
    <property type="match status" value="1"/>
</dbReference>
<dbReference type="SUPFAM" id="SSF53098">
    <property type="entry name" value="Ribonuclease H-like"/>
    <property type="match status" value="1"/>
</dbReference>
<dbReference type="PROSITE" id="PS50879">
    <property type="entry name" value="RNASE_H_1"/>
    <property type="match status" value="1"/>
</dbReference>
<evidence type="ECO:0000255" key="1">
    <source>
        <dbReference type="HAMAP-Rule" id="MF_00042"/>
    </source>
</evidence>
<evidence type="ECO:0000255" key="2">
    <source>
        <dbReference type="PROSITE-ProRule" id="PRU00408"/>
    </source>
</evidence>
<proteinExistence type="inferred from homology"/>
<name>RNH_BORPE</name>
<protein>
    <recommendedName>
        <fullName evidence="1">Ribonuclease H</fullName>
        <shortName evidence="1">RNase H</shortName>
        <ecNumber evidence="1">3.1.26.4</ecNumber>
    </recommendedName>
</protein>
<feature type="chain" id="PRO_0000332566" description="Ribonuclease H">
    <location>
        <begin position="1"/>
        <end position="155"/>
    </location>
</feature>
<feature type="domain" description="RNase H type-1" evidence="2">
    <location>
        <begin position="9"/>
        <end position="150"/>
    </location>
</feature>
<feature type="binding site" evidence="1">
    <location>
        <position position="18"/>
    </location>
    <ligand>
        <name>Mg(2+)</name>
        <dbReference type="ChEBI" id="CHEBI:18420"/>
        <label>1</label>
    </ligand>
</feature>
<feature type="binding site" evidence="1">
    <location>
        <position position="18"/>
    </location>
    <ligand>
        <name>Mg(2+)</name>
        <dbReference type="ChEBI" id="CHEBI:18420"/>
        <label>2</label>
    </ligand>
</feature>
<feature type="binding site" evidence="1">
    <location>
        <position position="56"/>
    </location>
    <ligand>
        <name>Mg(2+)</name>
        <dbReference type="ChEBI" id="CHEBI:18420"/>
        <label>1</label>
    </ligand>
</feature>
<feature type="binding site" evidence="1">
    <location>
        <position position="78"/>
    </location>
    <ligand>
        <name>Mg(2+)</name>
        <dbReference type="ChEBI" id="CHEBI:18420"/>
        <label>1</label>
    </ligand>
</feature>
<feature type="binding site" evidence="1">
    <location>
        <position position="142"/>
    </location>
    <ligand>
        <name>Mg(2+)</name>
        <dbReference type="ChEBI" id="CHEBI:18420"/>
        <label>2</label>
    </ligand>
</feature>
<sequence length="155" mass="17487">MQNLEGSGDGQQVEMWTDGACKGNPGPGGWGVLMRAGQHEKTMHGGERQTTNNRMELMAVIEGLRALKRPCRVTIHTDSQYVMKGMTEWLANWKRRGWRTADKKPVKNVELWQALDEQVGRHQVQWRWVRGHAGDPGNERADALANQGMEAARGR</sequence>
<comment type="function">
    <text evidence="1">Endonuclease that specifically degrades the RNA of RNA-DNA hybrids.</text>
</comment>
<comment type="catalytic activity">
    <reaction evidence="1">
        <text>Endonucleolytic cleavage to 5'-phosphomonoester.</text>
        <dbReference type="EC" id="3.1.26.4"/>
    </reaction>
</comment>
<comment type="cofactor">
    <cofactor evidence="1">
        <name>Mg(2+)</name>
        <dbReference type="ChEBI" id="CHEBI:18420"/>
    </cofactor>
    <text evidence="1">Binds 1 Mg(2+) ion per subunit. May bind a second metal ion at a regulatory site, or after substrate binding.</text>
</comment>
<comment type="subunit">
    <text evidence="1">Monomer.</text>
</comment>
<comment type="subcellular location">
    <subcellularLocation>
        <location evidence="1">Cytoplasm</location>
    </subcellularLocation>
</comment>
<comment type="similarity">
    <text evidence="1">Belongs to the RNase H family.</text>
</comment>
<accession>Q7VRX8</accession>
<reference key="1">
    <citation type="journal article" date="2003" name="Nat. Genet.">
        <title>Comparative analysis of the genome sequences of Bordetella pertussis, Bordetella parapertussis and Bordetella bronchiseptica.</title>
        <authorList>
            <person name="Parkhill J."/>
            <person name="Sebaihia M."/>
            <person name="Preston A."/>
            <person name="Murphy L.D."/>
            <person name="Thomson N.R."/>
            <person name="Harris D.E."/>
            <person name="Holden M.T.G."/>
            <person name="Churcher C.M."/>
            <person name="Bentley S.D."/>
            <person name="Mungall K.L."/>
            <person name="Cerdeno-Tarraga A.-M."/>
            <person name="Temple L."/>
            <person name="James K.D."/>
            <person name="Harris B."/>
            <person name="Quail M.A."/>
            <person name="Achtman M."/>
            <person name="Atkin R."/>
            <person name="Baker S."/>
            <person name="Basham D."/>
            <person name="Bason N."/>
            <person name="Cherevach I."/>
            <person name="Chillingworth T."/>
            <person name="Collins M."/>
            <person name="Cronin A."/>
            <person name="Davis P."/>
            <person name="Doggett J."/>
            <person name="Feltwell T."/>
            <person name="Goble A."/>
            <person name="Hamlin N."/>
            <person name="Hauser H."/>
            <person name="Holroyd S."/>
            <person name="Jagels K."/>
            <person name="Leather S."/>
            <person name="Moule S."/>
            <person name="Norberczak H."/>
            <person name="O'Neil S."/>
            <person name="Ormond D."/>
            <person name="Price C."/>
            <person name="Rabbinowitsch E."/>
            <person name="Rutter S."/>
            <person name="Sanders M."/>
            <person name="Saunders D."/>
            <person name="Seeger K."/>
            <person name="Sharp S."/>
            <person name="Simmonds M."/>
            <person name="Skelton J."/>
            <person name="Squares R."/>
            <person name="Squares S."/>
            <person name="Stevens K."/>
            <person name="Unwin L."/>
            <person name="Whitehead S."/>
            <person name="Barrell B.G."/>
            <person name="Maskell D.J."/>
        </authorList>
    </citation>
    <scope>NUCLEOTIDE SEQUENCE [LARGE SCALE GENOMIC DNA]</scope>
    <source>
        <strain>Tohama I / ATCC BAA-589 / NCTC 13251</strain>
    </source>
</reference>
<gene>
    <name evidence="1" type="primary">rnhA</name>
    <name type="ordered locus">BP3211</name>
</gene>
<keyword id="KW-0963">Cytoplasm</keyword>
<keyword id="KW-0255">Endonuclease</keyword>
<keyword id="KW-0378">Hydrolase</keyword>
<keyword id="KW-0460">Magnesium</keyword>
<keyword id="KW-0479">Metal-binding</keyword>
<keyword id="KW-0540">Nuclease</keyword>
<keyword id="KW-1185">Reference proteome</keyword>